<keyword id="KW-0687">Ribonucleoprotein</keyword>
<keyword id="KW-0689">Ribosomal protein</keyword>
<comment type="function">
    <text evidence="1">Involved in the binding of tRNA to the ribosomes.</text>
</comment>
<comment type="subunit">
    <text evidence="1">Part of the 30S ribosomal subunit.</text>
</comment>
<comment type="similarity">
    <text evidence="1">Belongs to the universal ribosomal protein uS10 family.</text>
</comment>
<gene>
    <name evidence="1" type="primary">rpsJ</name>
    <name type="ordered locus">Fphi_0587</name>
</gene>
<reference key="1">
    <citation type="submission" date="2007-12" db="EMBL/GenBank/DDBJ databases">
        <title>Complete sequence of chromosome of Francisella philomiragia subsp. philomiragia ATCC 25017.</title>
        <authorList>
            <consortium name="US DOE Joint Genome Institute"/>
            <person name="Copeland A."/>
            <person name="Lucas S."/>
            <person name="Lapidus A."/>
            <person name="Barry K."/>
            <person name="Detter J.C."/>
            <person name="Glavina del Rio T."/>
            <person name="Hammon N."/>
            <person name="Israni S."/>
            <person name="Dalin E."/>
            <person name="Tice H."/>
            <person name="Pitluck S."/>
            <person name="Chain P."/>
            <person name="Malfatti S."/>
            <person name="Shin M."/>
            <person name="Vergez L."/>
            <person name="Schmutz J."/>
            <person name="Larimer F."/>
            <person name="Land M."/>
            <person name="Hauser L."/>
            <person name="Richardson P."/>
        </authorList>
    </citation>
    <scope>NUCLEOTIDE SEQUENCE [LARGE SCALE GENOMIC DNA]</scope>
    <source>
        <strain>ATCC 25017 / CCUG 19701 / FSC 153 / O#319-036</strain>
    </source>
</reference>
<dbReference type="EMBL" id="CP000937">
    <property type="protein sequence ID" value="ABZ86806.1"/>
    <property type="molecule type" value="Genomic_DNA"/>
</dbReference>
<dbReference type="SMR" id="B0U0Z0"/>
<dbReference type="KEGG" id="fph:Fphi_0587"/>
<dbReference type="eggNOG" id="COG0051">
    <property type="taxonomic scope" value="Bacteria"/>
</dbReference>
<dbReference type="HOGENOM" id="CLU_122625_1_3_6"/>
<dbReference type="GO" id="GO:1990904">
    <property type="term" value="C:ribonucleoprotein complex"/>
    <property type="evidence" value="ECO:0007669"/>
    <property type="project" value="UniProtKB-KW"/>
</dbReference>
<dbReference type="GO" id="GO:0005840">
    <property type="term" value="C:ribosome"/>
    <property type="evidence" value="ECO:0007669"/>
    <property type="project" value="UniProtKB-KW"/>
</dbReference>
<dbReference type="GO" id="GO:0003735">
    <property type="term" value="F:structural constituent of ribosome"/>
    <property type="evidence" value="ECO:0007669"/>
    <property type="project" value="InterPro"/>
</dbReference>
<dbReference type="GO" id="GO:0000049">
    <property type="term" value="F:tRNA binding"/>
    <property type="evidence" value="ECO:0007669"/>
    <property type="project" value="UniProtKB-UniRule"/>
</dbReference>
<dbReference type="GO" id="GO:0006412">
    <property type="term" value="P:translation"/>
    <property type="evidence" value="ECO:0007669"/>
    <property type="project" value="UniProtKB-UniRule"/>
</dbReference>
<dbReference type="FunFam" id="3.30.70.600:FF:000001">
    <property type="entry name" value="30S ribosomal protein S10"/>
    <property type="match status" value="1"/>
</dbReference>
<dbReference type="Gene3D" id="3.30.70.600">
    <property type="entry name" value="Ribosomal protein S10 domain"/>
    <property type="match status" value="1"/>
</dbReference>
<dbReference type="HAMAP" id="MF_00508">
    <property type="entry name" value="Ribosomal_uS10"/>
    <property type="match status" value="1"/>
</dbReference>
<dbReference type="InterPro" id="IPR001848">
    <property type="entry name" value="Ribosomal_uS10"/>
</dbReference>
<dbReference type="InterPro" id="IPR027486">
    <property type="entry name" value="Ribosomal_uS10_dom"/>
</dbReference>
<dbReference type="InterPro" id="IPR036838">
    <property type="entry name" value="Ribosomal_uS10_dom_sf"/>
</dbReference>
<dbReference type="NCBIfam" id="NF001861">
    <property type="entry name" value="PRK00596.1"/>
    <property type="match status" value="1"/>
</dbReference>
<dbReference type="NCBIfam" id="TIGR01049">
    <property type="entry name" value="rpsJ_bact"/>
    <property type="match status" value="1"/>
</dbReference>
<dbReference type="PANTHER" id="PTHR11700">
    <property type="entry name" value="30S RIBOSOMAL PROTEIN S10 FAMILY MEMBER"/>
    <property type="match status" value="1"/>
</dbReference>
<dbReference type="Pfam" id="PF00338">
    <property type="entry name" value="Ribosomal_S10"/>
    <property type="match status" value="1"/>
</dbReference>
<dbReference type="PRINTS" id="PR00971">
    <property type="entry name" value="RIBOSOMALS10"/>
</dbReference>
<dbReference type="SMART" id="SM01403">
    <property type="entry name" value="Ribosomal_S10"/>
    <property type="match status" value="1"/>
</dbReference>
<dbReference type="SUPFAM" id="SSF54999">
    <property type="entry name" value="Ribosomal protein S10"/>
    <property type="match status" value="1"/>
</dbReference>
<sequence>MAINNQRIRIRLKAFDHKLIDISTQEIVDTAKKTGAQVKGPIPLPVRKEKFTILISPHVNKKARDQYEIRTHKRLIDIVEPTDKTVDALMKLDLASGVDVQISLS</sequence>
<feature type="chain" id="PRO_1000081550" description="Small ribosomal subunit protein uS10">
    <location>
        <begin position="1"/>
        <end position="105"/>
    </location>
</feature>
<name>RS10_FRAP2</name>
<protein>
    <recommendedName>
        <fullName evidence="1">Small ribosomal subunit protein uS10</fullName>
    </recommendedName>
    <alternativeName>
        <fullName evidence="2">30S ribosomal protein S10</fullName>
    </alternativeName>
</protein>
<organism>
    <name type="scientific">Francisella philomiragia subsp. philomiragia (strain ATCC 25017 / CCUG 19701 / FSC 153 / O#319-036)</name>
    <dbReference type="NCBI Taxonomy" id="484022"/>
    <lineage>
        <taxon>Bacteria</taxon>
        <taxon>Pseudomonadati</taxon>
        <taxon>Pseudomonadota</taxon>
        <taxon>Gammaproteobacteria</taxon>
        <taxon>Thiotrichales</taxon>
        <taxon>Francisellaceae</taxon>
        <taxon>Francisella</taxon>
    </lineage>
</organism>
<accession>B0U0Z0</accession>
<evidence type="ECO:0000255" key="1">
    <source>
        <dbReference type="HAMAP-Rule" id="MF_00508"/>
    </source>
</evidence>
<evidence type="ECO:0000305" key="2"/>
<proteinExistence type="inferred from homology"/>